<organism>
    <name type="scientific">Rhodobacter capsulatus (strain ATCC BAA-309 / NBRC 16581 / SB1003)</name>
    <dbReference type="NCBI Taxonomy" id="272942"/>
    <lineage>
        <taxon>Bacteria</taxon>
        <taxon>Pseudomonadati</taxon>
        <taxon>Pseudomonadota</taxon>
        <taxon>Alphaproteobacteria</taxon>
        <taxon>Rhodobacterales</taxon>
        <taxon>Rhodobacter group</taxon>
        <taxon>Rhodobacter</taxon>
    </lineage>
</organism>
<feature type="chain" id="PRO_0000430553" description="Sulfoacetaldehyde acetyltransferase">
    <location>
        <begin position="1"/>
        <end position="590"/>
    </location>
</feature>
<sequence>MRMTTEEAFVKVLQRHGIDTAFGIIGSAFMPISDLFPRAGIRFFDCAHEGSGGMMADGFTRASGRMAMIIAQNGPGVTNFVTAVKTAYWNHTPMLVVTPQAANRTIGQGGFQEVEQMALFRDMVCWQEELRDPARIAEVLDRVIRKARRASAPAQINLPRDMFTKIIDIELPQGVDLPRPAPDAQALDRAAALLSSARFPVILNGAGVVLAEAIPDTVALAERLEAPVCTGYQHNDAFPGSHPLFAGPLGYNGSKAAMQLMSQADVVLCLGTRLNPFSTLPGYGIDYWPKAAAVIQVDINPDRIGLTRPVTLGIAADAGAVARGILARLGAQAGDQDRAERAARIATTKSRWAQELASMDHEEDDPGTSWNERARAAKPGWMSPRMAWRAITAALPPEAILSSDIGNNCAIGNAYPSFAAGRKYLAPGLFGPCGYGLPAIIGAKIACPETPVVGFAGDGAFGISVTELTAIGRADWPAITMVVFRNYQWGAEKRNSTLWYDDNFVGTELDLQVSYAGIAQACGLQGVVARTMEELTEALRKALADQAAGKTTLIEALINQELGEPFRRDAMTKPVVVAGIDPADMRPQPR</sequence>
<reference key="1">
    <citation type="journal article" date="2010" name="J. Bacteriol.">
        <title>Complete genome sequence of the photosynthetic purple nonsulfur bacterium Rhodobacter capsulatus SB 1003.</title>
        <authorList>
            <person name="Strnad H."/>
            <person name="Lapidus A."/>
            <person name="Paces J."/>
            <person name="Ulbrich P."/>
            <person name="Vlcek C."/>
            <person name="Paces V."/>
            <person name="Haselkorn R."/>
        </authorList>
    </citation>
    <scope>NUCLEOTIDE SEQUENCE [LARGE SCALE GENOMIC DNA]</scope>
    <source>
        <strain>ATCC BAA-309 / NBRC 16581 / SB1003</strain>
    </source>
</reference>
<reference key="2">
    <citation type="journal article" date="2008" name="J. Bacteriol.">
        <title>The GntR-like regulator TauR activates expression of taurine utilization genes in Rhodobacter capsulatus.</title>
        <authorList>
            <person name="Wiethaus J."/>
            <person name="Schubert B."/>
            <person name="Pfaender Y."/>
            <person name="Narberhaus F."/>
            <person name="Masepohl B."/>
        </authorList>
    </citation>
    <scope>INDUCTION</scope>
    <source>
        <strain>B10S</strain>
    </source>
</reference>
<evidence type="ECO:0000250" key="1">
    <source>
        <dbReference type="UniProtKB" id="Q84H44"/>
    </source>
</evidence>
<evidence type="ECO:0000269" key="2">
    <source>
    </source>
</evidence>
<evidence type="ECO:0000303" key="3">
    <source>
    </source>
</evidence>
<evidence type="ECO:0000305" key="4"/>
<evidence type="ECO:0000312" key="5">
    <source>
        <dbReference type="EMBL" id="ADE85968.1"/>
    </source>
</evidence>
<gene>
    <name evidence="3" type="primary">xsc</name>
    <name evidence="5" type="ordered locus">RCAP_rcc02238</name>
</gene>
<keyword id="KW-0012">Acyltransferase</keyword>
<keyword id="KW-0963">Cytoplasm</keyword>
<keyword id="KW-0460">Magnesium</keyword>
<keyword id="KW-0479">Metal-binding</keyword>
<keyword id="KW-1185">Reference proteome</keyword>
<keyword id="KW-0786">Thiamine pyrophosphate</keyword>
<keyword id="KW-0808">Transferase</keyword>
<dbReference type="EC" id="2.3.3.15" evidence="1"/>
<dbReference type="EMBL" id="CP001312">
    <property type="protein sequence ID" value="ADE85968.1"/>
    <property type="molecule type" value="Genomic_DNA"/>
</dbReference>
<dbReference type="RefSeq" id="WP_013067947.1">
    <property type="nucleotide sequence ID" value="NC_014034.1"/>
</dbReference>
<dbReference type="SMR" id="D5AKX8"/>
<dbReference type="STRING" id="272942.RCAP_rcc02238"/>
<dbReference type="GeneID" id="31491080"/>
<dbReference type="KEGG" id="rcp:RCAP_rcc02238"/>
<dbReference type="eggNOG" id="COG0028">
    <property type="taxonomic scope" value="Bacteria"/>
</dbReference>
<dbReference type="HOGENOM" id="CLU_013748_3_1_5"/>
<dbReference type="OrthoDB" id="4494979at2"/>
<dbReference type="UniPathway" id="UPA00336">
    <property type="reaction ID" value="UER00544"/>
</dbReference>
<dbReference type="Proteomes" id="UP000002361">
    <property type="component" value="Chromosome"/>
</dbReference>
<dbReference type="GO" id="GO:0005948">
    <property type="term" value="C:acetolactate synthase complex"/>
    <property type="evidence" value="ECO:0007669"/>
    <property type="project" value="TreeGrafter"/>
</dbReference>
<dbReference type="GO" id="GO:0003984">
    <property type="term" value="F:acetolactate synthase activity"/>
    <property type="evidence" value="ECO:0007669"/>
    <property type="project" value="TreeGrafter"/>
</dbReference>
<dbReference type="GO" id="GO:0050660">
    <property type="term" value="F:flavin adenine dinucleotide binding"/>
    <property type="evidence" value="ECO:0007669"/>
    <property type="project" value="TreeGrafter"/>
</dbReference>
<dbReference type="GO" id="GO:0000287">
    <property type="term" value="F:magnesium ion binding"/>
    <property type="evidence" value="ECO:0007669"/>
    <property type="project" value="InterPro"/>
</dbReference>
<dbReference type="GO" id="GO:0050487">
    <property type="term" value="F:sulfoacetaldehyde acetyltransferase activity"/>
    <property type="evidence" value="ECO:0007669"/>
    <property type="project" value="UniProtKB-EC"/>
</dbReference>
<dbReference type="GO" id="GO:0030976">
    <property type="term" value="F:thiamine pyrophosphate binding"/>
    <property type="evidence" value="ECO:0007669"/>
    <property type="project" value="InterPro"/>
</dbReference>
<dbReference type="GO" id="GO:0009097">
    <property type="term" value="P:isoleucine biosynthetic process"/>
    <property type="evidence" value="ECO:0007669"/>
    <property type="project" value="TreeGrafter"/>
</dbReference>
<dbReference type="GO" id="GO:0009099">
    <property type="term" value="P:L-valine biosynthetic process"/>
    <property type="evidence" value="ECO:0007669"/>
    <property type="project" value="TreeGrafter"/>
</dbReference>
<dbReference type="GO" id="GO:0019529">
    <property type="term" value="P:taurine catabolic process"/>
    <property type="evidence" value="ECO:0007669"/>
    <property type="project" value="InterPro"/>
</dbReference>
<dbReference type="CDD" id="cd07035">
    <property type="entry name" value="TPP_PYR_POX_like"/>
    <property type="match status" value="1"/>
</dbReference>
<dbReference type="FunFam" id="3.40.50.970:FF:000107">
    <property type="entry name" value="Sulfoacetaldehyde acetyltransferase Xsc"/>
    <property type="match status" value="1"/>
</dbReference>
<dbReference type="Gene3D" id="3.40.50.970">
    <property type="match status" value="2"/>
</dbReference>
<dbReference type="Gene3D" id="3.40.50.1220">
    <property type="entry name" value="TPP-binding domain"/>
    <property type="match status" value="1"/>
</dbReference>
<dbReference type="InterPro" id="IPR029035">
    <property type="entry name" value="DHS-like_NAD/FAD-binding_dom"/>
</dbReference>
<dbReference type="InterPro" id="IPR017820">
    <property type="entry name" value="Sulphoacetald_Actrfrase"/>
</dbReference>
<dbReference type="InterPro" id="IPR029061">
    <property type="entry name" value="THDP-binding"/>
</dbReference>
<dbReference type="InterPro" id="IPR012000">
    <property type="entry name" value="Thiamin_PyroP_enz_cen_dom"/>
</dbReference>
<dbReference type="InterPro" id="IPR012001">
    <property type="entry name" value="Thiamin_PyroP_enz_TPP-bd_dom"/>
</dbReference>
<dbReference type="InterPro" id="IPR000399">
    <property type="entry name" value="TPP-bd_CS"/>
</dbReference>
<dbReference type="InterPro" id="IPR045229">
    <property type="entry name" value="TPP_enz"/>
</dbReference>
<dbReference type="InterPro" id="IPR011766">
    <property type="entry name" value="TPP_enzyme_TPP-bd"/>
</dbReference>
<dbReference type="NCBIfam" id="NF005713">
    <property type="entry name" value="PRK07525.1"/>
    <property type="match status" value="1"/>
</dbReference>
<dbReference type="NCBIfam" id="TIGR03457">
    <property type="entry name" value="sulphoacet_xsc"/>
    <property type="match status" value="1"/>
</dbReference>
<dbReference type="PANTHER" id="PTHR18968:SF166">
    <property type="entry name" value="2-HYDROXYACYL-COA LYASE 2"/>
    <property type="match status" value="1"/>
</dbReference>
<dbReference type="PANTHER" id="PTHR18968">
    <property type="entry name" value="THIAMINE PYROPHOSPHATE ENZYMES"/>
    <property type="match status" value="1"/>
</dbReference>
<dbReference type="Pfam" id="PF02775">
    <property type="entry name" value="TPP_enzyme_C"/>
    <property type="match status" value="1"/>
</dbReference>
<dbReference type="Pfam" id="PF00205">
    <property type="entry name" value="TPP_enzyme_M"/>
    <property type="match status" value="1"/>
</dbReference>
<dbReference type="Pfam" id="PF02776">
    <property type="entry name" value="TPP_enzyme_N"/>
    <property type="match status" value="1"/>
</dbReference>
<dbReference type="SUPFAM" id="SSF52467">
    <property type="entry name" value="DHS-like NAD/FAD-binding domain"/>
    <property type="match status" value="1"/>
</dbReference>
<dbReference type="SUPFAM" id="SSF52518">
    <property type="entry name" value="Thiamin diphosphate-binding fold (THDP-binding)"/>
    <property type="match status" value="2"/>
</dbReference>
<dbReference type="PROSITE" id="PS00187">
    <property type="entry name" value="TPP_ENZYMES"/>
    <property type="match status" value="1"/>
</dbReference>
<protein>
    <recommendedName>
        <fullName evidence="1">Sulfoacetaldehyde acetyltransferase</fullName>
        <ecNumber evidence="1">2.3.3.15</ecNumber>
    </recommendedName>
</protein>
<proteinExistence type="evidence at transcript level"/>
<comment type="catalytic activity">
    <reaction evidence="1">
        <text>acetyl phosphate + sulfite + H(+) = sulfoacetaldehyde + phosphate</text>
        <dbReference type="Rhea" id="RHEA:24204"/>
        <dbReference type="ChEBI" id="CHEBI:15378"/>
        <dbReference type="ChEBI" id="CHEBI:17359"/>
        <dbReference type="ChEBI" id="CHEBI:22191"/>
        <dbReference type="ChEBI" id="CHEBI:43474"/>
        <dbReference type="ChEBI" id="CHEBI:58246"/>
        <dbReference type="EC" id="2.3.3.15"/>
    </reaction>
</comment>
<comment type="cofactor">
    <cofactor evidence="1">
        <name>Mg(2+)</name>
        <dbReference type="ChEBI" id="CHEBI:18420"/>
    </cofactor>
</comment>
<comment type="cofactor">
    <cofactor evidence="1">
        <name>thiamine diphosphate</name>
        <dbReference type="ChEBI" id="CHEBI:58937"/>
    </cofactor>
</comment>
<comment type="pathway">
    <text evidence="1">Organosulfur degradation; taurine degradation via aerobic pathway; acetyl phosphate and sulfite from taurine: step 2/2.</text>
</comment>
<comment type="subcellular location">
    <subcellularLocation>
        <location evidence="1">Cytoplasm</location>
    </subcellularLocation>
</comment>
<comment type="induction">
    <text evidence="2">Induced by taurine via TauR.</text>
</comment>
<comment type="similarity">
    <text evidence="4">Belongs to the TPP enzyme family.</text>
</comment>
<name>XSC_RHOCB</name>
<accession>D5AKX8</accession>